<comment type="function">
    <text evidence="1">Catalyzes the phosphorylation of the 3'-hydroxyl group of dephosphocoenzyme A to form coenzyme A.</text>
</comment>
<comment type="catalytic activity">
    <reaction evidence="1">
        <text>3'-dephospho-CoA + ATP = ADP + CoA + H(+)</text>
        <dbReference type="Rhea" id="RHEA:18245"/>
        <dbReference type="ChEBI" id="CHEBI:15378"/>
        <dbReference type="ChEBI" id="CHEBI:30616"/>
        <dbReference type="ChEBI" id="CHEBI:57287"/>
        <dbReference type="ChEBI" id="CHEBI:57328"/>
        <dbReference type="ChEBI" id="CHEBI:456216"/>
        <dbReference type="EC" id="2.7.1.24"/>
    </reaction>
</comment>
<comment type="pathway">
    <text evidence="1">Cofactor biosynthesis; coenzyme A biosynthesis; CoA from (R)-pantothenate: step 5/5.</text>
</comment>
<comment type="subcellular location">
    <subcellularLocation>
        <location evidence="1">Cytoplasm</location>
    </subcellularLocation>
</comment>
<comment type="domain">
    <text evidence="1">The C-terminal UPF0157 domain is involved in the proper folding of the full length enzyme.</text>
</comment>
<comment type="similarity">
    <text evidence="2">In the N-terminal section; belongs to the CoaE family.</text>
</comment>
<comment type="similarity">
    <text evidence="2">In the C-terminal section; belongs to the UPF0157 (GrpB) family.</text>
</comment>
<reference key="1">
    <citation type="journal article" date="2005" name="Proc. Natl. Acad. Sci. U.S.A.">
        <title>The complete genome sequence of Mycobacterium avium subspecies paratuberculosis.</title>
        <authorList>
            <person name="Li L."/>
            <person name="Bannantine J.P."/>
            <person name="Zhang Q."/>
            <person name="Amonsin A."/>
            <person name="May B.J."/>
            <person name="Alt D."/>
            <person name="Banerji N."/>
            <person name="Kanjilal S."/>
            <person name="Kapur V."/>
        </authorList>
    </citation>
    <scope>NUCLEOTIDE SEQUENCE [LARGE SCALE GENOMIC DNA]</scope>
    <source>
        <strain>ATCC BAA-968 / K-10</strain>
    </source>
</reference>
<organism>
    <name type="scientific">Mycolicibacterium paratuberculosis (strain ATCC BAA-968 / K-10)</name>
    <name type="common">Mycobacterium paratuberculosis</name>
    <dbReference type="NCBI Taxonomy" id="262316"/>
    <lineage>
        <taxon>Bacteria</taxon>
        <taxon>Bacillati</taxon>
        <taxon>Actinomycetota</taxon>
        <taxon>Actinomycetes</taxon>
        <taxon>Mycobacteriales</taxon>
        <taxon>Mycobacteriaceae</taxon>
        <taxon>Mycobacterium</taxon>
        <taxon>Mycobacterium avium complex (MAC)</taxon>
    </lineage>
</organism>
<name>COAE_MYCPA</name>
<accession>Q740M4</accession>
<gene>
    <name evidence="1" type="primary">coaE</name>
    <name type="ordered locus">MAP_1326</name>
</gene>
<evidence type="ECO:0000255" key="1">
    <source>
        <dbReference type="HAMAP-Rule" id="MF_00376"/>
    </source>
</evidence>
<evidence type="ECO:0000305" key="2"/>
<evidence type="ECO:0007829" key="3">
    <source>
        <dbReference type="PDB" id="6N39"/>
    </source>
</evidence>
<dbReference type="EC" id="2.7.1.24" evidence="1"/>
<dbReference type="EMBL" id="AE016958">
    <property type="protein sequence ID" value="AAS03643.1"/>
    <property type="molecule type" value="Genomic_DNA"/>
</dbReference>
<dbReference type="RefSeq" id="WP_003876238.1">
    <property type="nucleotide sequence ID" value="NZ_CP106873.1"/>
</dbReference>
<dbReference type="PDB" id="6N39">
    <property type="method" value="X-ray"/>
    <property type="resolution" value="2.15 A"/>
    <property type="chains" value="A=1-407"/>
</dbReference>
<dbReference type="PDBsum" id="6N39"/>
<dbReference type="SMR" id="Q740M4"/>
<dbReference type="STRING" id="262316.MAP_1326"/>
<dbReference type="KEGG" id="mpa:MAP_1326"/>
<dbReference type="eggNOG" id="COG0237">
    <property type="taxonomic scope" value="Bacteria"/>
</dbReference>
<dbReference type="eggNOG" id="COG2320">
    <property type="taxonomic scope" value="Bacteria"/>
</dbReference>
<dbReference type="HOGENOM" id="CLU_067032_0_0_11"/>
<dbReference type="UniPathway" id="UPA00241">
    <property type="reaction ID" value="UER00356"/>
</dbReference>
<dbReference type="Proteomes" id="UP000000580">
    <property type="component" value="Chromosome"/>
</dbReference>
<dbReference type="GO" id="GO:0005737">
    <property type="term" value="C:cytoplasm"/>
    <property type="evidence" value="ECO:0007669"/>
    <property type="project" value="UniProtKB-SubCell"/>
</dbReference>
<dbReference type="GO" id="GO:0005524">
    <property type="term" value="F:ATP binding"/>
    <property type="evidence" value="ECO:0007669"/>
    <property type="project" value="UniProtKB-UniRule"/>
</dbReference>
<dbReference type="GO" id="GO:0004140">
    <property type="term" value="F:dephospho-CoA kinase activity"/>
    <property type="evidence" value="ECO:0007669"/>
    <property type="project" value="UniProtKB-UniRule"/>
</dbReference>
<dbReference type="GO" id="GO:0015937">
    <property type="term" value="P:coenzyme A biosynthetic process"/>
    <property type="evidence" value="ECO:0007669"/>
    <property type="project" value="UniProtKB-UniRule"/>
</dbReference>
<dbReference type="CDD" id="cd02022">
    <property type="entry name" value="DPCK"/>
    <property type="match status" value="1"/>
</dbReference>
<dbReference type="Gene3D" id="3.30.460.10">
    <property type="entry name" value="Beta Polymerase, domain 2"/>
    <property type="match status" value="1"/>
</dbReference>
<dbReference type="Gene3D" id="3.40.50.300">
    <property type="entry name" value="P-loop containing nucleotide triphosphate hydrolases"/>
    <property type="match status" value="1"/>
</dbReference>
<dbReference type="HAMAP" id="MF_00376">
    <property type="entry name" value="Dephospho_CoA_kinase"/>
    <property type="match status" value="1"/>
</dbReference>
<dbReference type="InterPro" id="IPR001977">
    <property type="entry name" value="Depp_CoAkinase"/>
</dbReference>
<dbReference type="InterPro" id="IPR007344">
    <property type="entry name" value="GrpB/CoaE"/>
</dbReference>
<dbReference type="InterPro" id="IPR043519">
    <property type="entry name" value="NT_sf"/>
</dbReference>
<dbReference type="InterPro" id="IPR027417">
    <property type="entry name" value="P-loop_NTPase"/>
</dbReference>
<dbReference type="NCBIfam" id="TIGR00152">
    <property type="entry name" value="dephospho-CoA kinase"/>
    <property type="match status" value="1"/>
</dbReference>
<dbReference type="NCBIfam" id="NF002879">
    <property type="entry name" value="PRK03333.1"/>
    <property type="match status" value="1"/>
</dbReference>
<dbReference type="PANTHER" id="PTHR10695:SF46">
    <property type="entry name" value="BIFUNCTIONAL COENZYME A SYNTHASE-RELATED"/>
    <property type="match status" value="1"/>
</dbReference>
<dbReference type="PANTHER" id="PTHR10695">
    <property type="entry name" value="DEPHOSPHO-COA KINASE-RELATED"/>
    <property type="match status" value="1"/>
</dbReference>
<dbReference type="Pfam" id="PF01121">
    <property type="entry name" value="CoaE"/>
    <property type="match status" value="1"/>
</dbReference>
<dbReference type="Pfam" id="PF04229">
    <property type="entry name" value="GrpB"/>
    <property type="match status" value="1"/>
</dbReference>
<dbReference type="SUPFAM" id="SSF81301">
    <property type="entry name" value="Nucleotidyltransferase"/>
    <property type="match status" value="1"/>
</dbReference>
<dbReference type="SUPFAM" id="SSF52540">
    <property type="entry name" value="P-loop containing nucleoside triphosphate hydrolases"/>
    <property type="match status" value="1"/>
</dbReference>
<dbReference type="PROSITE" id="PS51219">
    <property type="entry name" value="DPCK"/>
    <property type="match status" value="1"/>
</dbReference>
<feature type="chain" id="PRO_0000172961" description="Dephospho-CoA kinase">
    <location>
        <begin position="1"/>
        <end position="407"/>
    </location>
</feature>
<feature type="domain" description="DPCK" evidence="1">
    <location>
        <begin position="3"/>
        <end position="201"/>
    </location>
</feature>
<feature type="region of interest" description="UPF0157">
    <location>
        <begin position="196"/>
        <end position="407"/>
    </location>
</feature>
<feature type="binding site" evidence="1">
    <location>
        <begin position="11"/>
        <end position="16"/>
    </location>
    <ligand>
        <name>ATP</name>
        <dbReference type="ChEBI" id="CHEBI:30616"/>
    </ligand>
</feature>
<feature type="strand" evidence="3">
    <location>
        <begin position="2"/>
        <end position="8"/>
    </location>
</feature>
<feature type="helix" evidence="3">
    <location>
        <begin position="14"/>
        <end position="23"/>
    </location>
</feature>
<feature type="strand" evidence="3">
    <location>
        <begin position="27"/>
        <end position="30"/>
    </location>
</feature>
<feature type="helix" evidence="3">
    <location>
        <begin position="31"/>
        <end position="37"/>
    </location>
</feature>
<feature type="helix" evidence="3">
    <location>
        <begin position="44"/>
        <end position="53"/>
    </location>
</feature>
<feature type="helix" evidence="3">
    <location>
        <begin position="66"/>
        <end position="75"/>
    </location>
</feature>
<feature type="strand" evidence="3">
    <location>
        <begin position="76"/>
        <end position="78"/>
    </location>
</feature>
<feature type="helix" evidence="3">
    <location>
        <begin position="79"/>
        <end position="101"/>
    </location>
</feature>
<feature type="strand" evidence="3">
    <location>
        <begin position="107"/>
        <end position="111"/>
    </location>
</feature>
<feature type="turn" evidence="3">
    <location>
        <begin position="113"/>
        <end position="119"/>
    </location>
</feature>
<feature type="helix" evidence="3">
    <location>
        <begin position="121"/>
        <end position="123"/>
    </location>
</feature>
<feature type="strand" evidence="3">
    <location>
        <begin position="127"/>
        <end position="131"/>
    </location>
</feature>
<feature type="helix" evidence="3">
    <location>
        <begin position="134"/>
        <end position="145"/>
    </location>
</feature>
<feature type="helix" evidence="3">
    <location>
        <begin position="149"/>
        <end position="157"/>
    </location>
</feature>
<feature type="helix" evidence="3">
    <location>
        <begin position="162"/>
        <end position="168"/>
    </location>
</feature>
<feature type="strand" evidence="3">
    <location>
        <begin position="170"/>
        <end position="174"/>
    </location>
</feature>
<feature type="helix" evidence="3">
    <location>
        <begin position="179"/>
        <end position="192"/>
    </location>
</feature>
<feature type="helix" evidence="3">
    <location>
        <begin position="194"/>
        <end position="202"/>
    </location>
</feature>
<feature type="helix" evidence="3">
    <location>
        <begin position="220"/>
        <end position="235"/>
    </location>
</feature>
<feature type="strand" evidence="3">
    <location>
        <begin position="240"/>
        <end position="246"/>
    </location>
</feature>
<feature type="helix" evidence="3">
    <location>
        <begin position="247"/>
        <end position="249"/>
    </location>
</feature>
<feature type="strand" evidence="3">
    <location>
        <begin position="258"/>
        <end position="260"/>
    </location>
</feature>
<feature type="strand" evidence="3">
    <location>
        <begin position="262"/>
        <end position="269"/>
    </location>
</feature>
<feature type="helix" evidence="3">
    <location>
        <begin position="271"/>
        <end position="276"/>
    </location>
</feature>
<feature type="helix" evidence="3">
    <location>
        <begin position="278"/>
        <end position="283"/>
    </location>
</feature>
<feature type="strand" evidence="3">
    <location>
        <begin position="299"/>
        <end position="301"/>
    </location>
</feature>
<feature type="helix" evidence="3">
    <location>
        <begin position="306"/>
        <end position="308"/>
    </location>
</feature>
<feature type="helix" evidence="3">
    <location>
        <begin position="314"/>
        <end position="317"/>
    </location>
</feature>
<feature type="strand" evidence="3">
    <location>
        <begin position="320"/>
        <end position="323"/>
    </location>
</feature>
<feature type="strand" evidence="3">
    <location>
        <begin position="331"/>
        <end position="337"/>
    </location>
</feature>
<feature type="helix" evidence="3">
    <location>
        <begin position="341"/>
        <end position="355"/>
    </location>
</feature>
<feature type="helix" evidence="3">
    <location>
        <begin position="357"/>
        <end position="374"/>
    </location>
</feature>
<feature type="helix" evidence="3">
    <location>
        <begin position="378"/>
        <end position="403"/>
    </location>
</feature>
<sequence length="407" mass="44150">MLRIGLTGGIGAGKSALSSAFAQCGAVIVDGDVIAREVVRPGTEGLAALVEAFGRDILLADGSLDRPALAAKAFADDAARQTLNGIVHPLVGARRAEIIASVPADSVVVEDIPLLVESGMAPLFPLVVIVYADVEVRLRRLVEQRGMAEADARARIAAQASDEQRRAVADIWLDNSGSPAELVQRAQQVWNERIVPFAHNLSTRQIARAPVRLVPPDPEWPAQAQRIVNRLKTASGHRALRVDHVGSTALPGDPDFAAKDVIDIQITVESLAAADELVEPLLAAGYPRLEHITADVAKPDARSTVERYDHTGDPALWHKRIHASADPGRPTNVHIRVDGWPGQQFALLFVDWLTADPDARADYLAVKRSAEQRADGDIDAYVAVKEPWFRDAYRRAWDWADSTGWKP</sequence>
<proteinExistence type="evidence at protein level"/>
<keyword id="KW-0002">3D-structure</keyword>
<keyword id="KW-0067">ATP-binding</keyword>
<keyword id="KW-0173">Coenzyme A biosynthesis</keyword>
<keyword id="KW-0963">Cytoplasm</keyword>
<keyword id="KW-0418">Kinase</keyword>
<keyword id="KW-0547">Nucleotide-binding</keyword>
<keyword id="KW-1185">Reference proteome</keyword>
<keyword id="KW-0808">Transferase</keyword>
<protein>
    <recommendedName>
        <fullName evidence="1">Dephospho-CoA kinase</fullName>
        <ecNumber evidence="1">2.7.1.24</ecNumber>
    </recommendedName>
    <alternativeName>
        <fullName evidence="1">Dephosphocoenzyme A kinase</fullName>
    </alternativeName>
</protein>